<proteinExistence type="inferred from homology"/>
<accession>A8GTZ9</accession>
<reference key="1">
    <citation type="submission" date="2007-09" db="EMBL/GenBank/DDBJ databases">
        <title>Complete genome sequence of Rickettsia rickettsii.</title>
        <authorList>
            <person name="Madan A."/>
            <person name="Fahey J."/>
            <person name="Helton E."/>
            <person name="Ketteman M."/>
            <person name="Madan A."/>
            <person name="Rodrigues S."/>
            <person name="Sanchez A."/>
            <person name="Dasch G."/>
            <person name="Eremeeva M."/>
        </authorList>
    </citation>
    <scope>NUCLEOTIDE SEQUENCE [LARGE SCALE GENOMIC DNA]</scope>
    <source>
        <strain>Sheila Smith</strain>
    </source>
</reference>
<keyword id="KW-0963">Cytoplasm</keyword>
<keyword id="KW-0342">GTP-binding</keyword>
<keyword id="KW-0378">Hydrolase</keyword>
<keyword id="KW-0460">Magnesium</keyword>
<keyword id="KW-0479">Metal-binding</keyword>
<keyword id="KW-0547">Nucleotide-binding</keyword>
<protein>
    <recommendedName>
        <fullName evidence="1">GTPase Obg</fullName>
        <ecNumber evidence="1">3.6.5.-</ecNumber>
    </recommendedName>
    <alternativeName>
        <fullName evidence="1">GTP-binding protein Obg</fullName>
    </alternativeName>
</protein>
<feature type="chain" id="PRO_0000386207" description="GTPase Obg">
    <location>
        <begin position="1"/>
        <end position="330"/>
    </location>
</feature>
<feature type="domain" description="Obg" evidence="2">
    <location>
        <begin position="1"/>
        <end position="159"/>
    </location>
</feature>
<feature type="domain" description="OBG-type G" evidence="1">
    <location>
        <begin position="160"/>
        <end position="327"/>
    </location>
</feature>
<feature type="binding site" evidence="1">
    <location>
        <begin position="166"/>
        <end position="173"/>
    </location>
    <ligand>
        <name>GTP</name>
        <dbReference type="ChEBI" id="CHEBI:37565"/>
    </ligand>
</feature>
<feature type="binding site" evidence="1">
    <location>
        <position position="173"/>
    </location>
    <ligand>
        <name>Mg(2+)</name>
        <dbReference type="ChEBI" id="CHEBI:18420"/>
    </ligand>
</feature>
<feature type="binding site" evidence="1">
    <location>
        <begin position="191"/>
        <end position="195"/>
    </location>
    <ligand>
        <name>GTP</name>
        <dbReference type="ChEBI" id="CHEBI:37565"/>
    </ligand>
</feature>
<feature type="binding site" evidence="1">
    <location>
        <position position="193"/>
    </location>
    <ligand>
        <name>Mg(2+)</name>
        <dbReference type="ChEBI" id="CHEBI:18420"/>
    </ligand>
</feature>
<feature type="binding site" evidence="1">
    <location>
        <begin position="212"/>
        <end position="215"/>
    </location>
    <ligand>
        <name>GTP</name>
        <dbReference type="ChEBI" id="CHEBI:37565"/>
    </ligand>
</feature>
<feature type="binding site" evidence="1">
    <location>
        <begin position="279"/>
        <end position="282"/>
    </location>
    <ligand>
        <name>GTP</name>
        <dbReference type="ChEBI" id="CHEBI:37565"/>
    </ligand>
</feature>
<feature type="binding site" evidence="1">
    <location>
        <begin position="308"/>
        <end position="310"/>
    </location>
    <ligand>
        <name>GTP</name>
        <dbReference type="ChEBI" id="CHEBI:37565"/>
    </ligand>
</feature>
<comment type="function">
    <text evidence="1">An essential GTPase which binds GTP, GDP and possibly (p)ppGpp with moderate affinity, with high nucleotide exchange rates and a fairly low GTP hydrolysis rate. Plays a role in control of the cell cycle, stress response, ribosome biogenesis and in those bacteria that undergo differentiation, in morphogenesis control.</text>
</comment>
<comment type="cofactor">
    <cofactor evidence="1">
        <name>Mg(2+)</name>
        <dbReference type="ChEBI" id="CHEBI:18420"/>
    </cofactor>
</comment>
<comment type="subunit">
    <text evidence="1">Monomer.</text>
</comment>
<comment type="subcellular location">
    <subcellularLocation>
        <location evidence="1">Cytoplasm</location>
    </subcellularLocation>
</comment>
<comment type="similarity">
    <text evidence="1">Belongs to the TRAFAC class OBG-HflX-like GTPase superfamily. OBG GTPase family.</text>
</comment>
<comment type="sequence caution" evidence="3">
    <conflict type="erroneous initiation">
        <sequence resource="EMBL-CDS" id="ABV76874"/>
    </conflict>
    <text>Extended N-terminus.</text>
</comment>
<name>OBG_RICRS</name>
<evidence type="ECO:0000255" key="1">
    <source>
        <dbReference type="HAMAP-Rule" id="MF_01454"/>
    </source>
</evidence>
<evidence type="ECO:0000255" key="2">
    <source>
        <dbReference type="PROSITE-ProRule" id="PRU01231"/>
    </source>
</evidence>
<evidence type="ECO:0000305" key="3"/>
<dbReference type="EC" id="3.6.5.-" evidence="1"/>
<dbReference type="EMBL" id="CP000848">
    <property type="protein sequence ID" value="ABV76874.1"/>
    <property type="status" value="ALT_INIT"/>
    <property type="molecule type" value="Genomic_DNA"/>
</dbReference>
<dbReference type="SMR" id="A8GTZ9"/>
<dbReference type="GeneID" id="79937906"/>
<dbReference type="KEGG" id="rri:A1G_07165"/>
<dbReference type="HOGENOM" id="CLU_011747_2_0_5"/>
<dbReference type="Proteomes" id="UP000006832">
    <property type="component" value="Chromosome"/>
</dbReference>
<dbReference type="GO" id="GO:0005737">
    <property type="term" value="C:cytoplasm"/>
    <property type="evidence" value="ECO:0007669"/>
    <property type="project" value="UniProtKB-SubCell"/>
</dbReference>
<dbReference type="GO" id="GO:0005525">
    <property type="term" value="F:GTP binding"/>
    <property type="evidence" value="ECO:0007669"/>
    <property type="project" value="UniProtKB-UniRule"/>
</dbReference>
<dbReference type="GO" id="GO:0003924">
    <property type="term" value="F:GTPase activity"/>
    <property type="evidence" value="ECO:0007669"/>
    <property type="project" value="UniProtKB-UniRule"/>
</dbReference>
<dbReference type="GO" id="GO:0000287">
    <property type="term" value="F:magnesium ion binding"/>
    <property type="evidence" value="ECO:0007669"/>
    <property type="project" value="InterPro"/>
</dbReference>
<dbReference type="GO" id="GO:0042254">
    <property type="term" value="P:ribosome biogenesis"/>
    <property type="evidence" value="ECO:0007669"/>
    <property type="project" value="UniProtKB-UniRule"/>
</dbReference>
<dbReference type="CDD" id="cd01898">
    <property type="entry name" value="Obg"/>
    <property type="match status" value="1"/>
</dbReference>
<dbReference type="FunFam" id="2.70.210.12:FF:000001">
    <property type="entry name" value="GTPase Obg"/>
    <property type="match status" value="1"/>
</dbReference>
<dbReference type="Gene3D" id="2.70.210.12">
    <property type="entry name" value="GTP1/OBG domain"/>
    <property type="match status" value="1"/>
</dbReference>
<dbReference type="Gene3D" id="3.40.50.300">
    <property type="entry name" value="P-loop containing nucleotide triphosphate hydrolases"/>
    <property type="match status" value="1"/>
</dbReference>
<dbReference type="HAMAP" id="MF_01454">
    <property type="entry name" value="GTPase_Obg"/>
    <property type="match status" value="1"/>
</dbReference>
<dbReference type="InterPro" id="IPR031167">
    <property type="entry name" value="G_OBG"/>
</dbReference>
<dbReference type="InterPro" id="IPR006073">
    <property type="entry name" value="GTP-bd"/>
</dbReference>
<dbReference type="InterPro" id="IPR014100">
    <property type="entry name" value="GTP-bd_Obg/CgtA"/>
</dbReference>
<dbReference type="InterPro" id="IPR006074">
    <property type="entry name" value="GTP1-OBG_CS"/>
</dbReference>
<dbReference type="InterPro" id="IPR006169">
    <property type="entry name" value="GTP1_OBG_dom"/>
</dbReference>
<dbReference type="InterPro" id="IPR036726">
    <property type="entry name" value="GTP1_OBG_dom_sf"/>
</dbReference>
<dbReference type="InterPro" id="IPR045086">
    <property type="entry name" value="OBG_GTPase"/>
</dbReference>
<dbReference type="InterPro" id="IPR027417">
    <property type="entry name" value="P-loop_NTPase"/>
</dbReference>
<dbReference type="NCBIfam" id="TIGR02729">
    <property type="entry name" value="Obg_CgtA"/>
    <property type="match status" value="1"/>
</dbReference>
<dbReference type="NCBIfam" id="NF008955">
    <property type="entry name" value="PRK12297.1"/>
    <property type="match status" value="1"/>
</dbReference>
<dbReference type="NCBIfam" id="NF008956">
    <property type="entry name" value="PRK12299.1"/>
    <property type="match status" value="1"/>
</dbReference>
<dbReference type="PANTHER" id="PTHR11702">
    <property type="entry name" value="DEVELOPMENTALLY REGULATED GTP-BINDING PROTEIN-RELATED"/>
    <property type="match status" value="1"/>
</dbReference>
<dbReference type="PANTHER" id="PTHR11702:SF31">
    <property type="entry name" value="MITOCHONDRIAL RIBOSOME-ASSOCIATED GTPASE 2"/>
    <property type="match status" value="1"/>
</dbReference>
<dbReference type="Pfam" id="PF01018">
    <property type="entry name" value="GTP1_OBG"/>
    <property type="match status" value="1"/>
</dbReference>
<dbReference type="Pfam" id="PF01926">
    <property type="entry name" value="MMR_HSR1"/>
    <property type="match status" value="1"/>
</dbReference>
<dbReference type="PIRSF" id="PIRSF002401">
    <property type="entry name" value="GTP_bd_Obg/CgtA"/>
    <property type="match status" value="1"/>
</dbReference>
<dbReference type="PRINTS" id="PR00326">
    <property type="entry name" value="GTP1OBG"/>
</dbReference>
<dbReference type="SUPFAM" id="SSF82051">
    <property type="entry name" value="Obg GTP-binding protein N-terminal domain"/>
    <property type="match status" value="1"/>
</dbReference>
<dbReference type="SUPFAM" id="SSF52540">
    <property type="entry name" value="P-loop containing nucleoside triphosphate hydrolases"/>
    <property type="match status" value="1"/>
</dbReference>
<dbReference type="PROSITE" id="PS51710">
    <property type="entry name" value="G_OBG"/>
    <property type="match status" value="1"/>
</dbReference>
<dbReference type="PROSITE" id="PS00905">
    <property type="entry name" value="GTP1_OBG"/>
    <property type="match status" value="1"/>
</dbReference>
<dbReference type="PROSITE" id="PS51883">
    <property type="entry name" value="OBG"/>
    <property type="match status" value="1"/>
</dbReference>
<organism>
    <name type="scientific">Rickettsia rickettsii (strain Sheila Smith)</name>
    <dbReference type="NCBI Taxonomy" id="392021"/>
    <lineage>
        <taxon>Bacteria</taxon>
        <taxon>Pseudomonadati</taxon>
        <taxon>Pseudomonadota</taxon>
        <taxon>Alphaproteobacteria</taxon>
        <taxon>Rickettsiales</taxon>
        <taxon>Rickettsiaceae</taxon>
        <taxon>Rickettsieae</taxon>
        <taxon>Rickettsia</taxon>
        <taxon>spotted fever group</taxon>
    </lineage>
</organism>
<sequence>MHFIDEVKIYIKGGNGGNGCVSFHREKFIDRGGPDGGDGGRGGSVIFRSNHHLNTLVNYRYKQHFTAENGENGKDSNRSGKSGKSLVLDVPIGTQIFSEDGNILFYDFTVDDQSFEIIKGGSGGLGNSHFKSSVNQAPRKRTEGEIAEEMWIHLSLKLLSDVGLVGLPNAGKSTFLSVVTAAKPKIADYPFTTLVPNLGVVYVDDEEFVIADIPGLIEGAHQGHGLGDKFLKHIERCNVLIHLIDGSSNDVVADYNTVRLELESYSDYLKNKIETICLNKCDVLTDEEIQEKINKLQKVTNKEVFPISTCTNAGVNKIVKLALETIKNQE</sequence>
<gene>
    <name evidence="1" type="primary">obg</name>
    <name type="ordered locus">A1G_07165</name>
</gene>